<accession>O46529</accession>
<protein>
    <recommendedName>
        <fullName>Ribonuclease K6</fullName>
        <shortName>RNase K6</shortName>
        <ecNumber>3.1.27.-</ecNumber>
    </recommendedName>
</protein>
<proteinExistence type="inferred from homology"/>
<reference key="1">
    <citation type="journal article" date="1998" name="Genome Res.">
        <title>Ribonuclease k6: chromosomal mapping and divergent rates of evolution within the RNase A gene superfamily.</title>
        <authorList>
            <person name="Deming M.S."/>
            <person name="Dyer K.D."/>
            <person name="Bankier A.T."/>
            <person name="Piper M.B."/>
            <person name="Dear P.H."/>
            <person name="Rosenberg H.F."/>
        </authorList>
    </citation>
    <scope>NUCLEOTIDE SEQUENCE [GENOMIC DNA]</scope>
    <source>
        <tissue>Lung</tissue>
    </source>
</reference>
<comment type="function">
    <text evidence="3">Ribonuclease which shows a preference for the pyrimidines uridine and cytosine. Has potent antibacterial activity against a range of Gram-positive and Gram-negative bacteria, including P.aeruginosa, A.baumanii, M.luteus, S.aureus, E.faecalis, E.faecium, S.saprophyticus and E.coli. Causes loss of bacterial membrane integrity, and also promotes agglutination of Gram-negative bacteria. Probably contributes to urinary tract sterility. Bactericidal activity is independent of RNase activity.</text>
</comment>
<comment type="subunit">
    <text evidence="3">Interacts (via N-terminus) with bacterial lipopolysaccharide (LPS).</text>
</comment>
<comment type="subcellular location">
    <subcellularLocation>
        <location evidence="3">Secreted</location>
    </subcellularLocation>
    <subcellularLocation>
        <location evidence="3">Lysosome</location>
    </subcellularLocation>
    <subcellularLocation>
        <location evidence="3">Cytoplasmic granule</location>
    </subcellularLocation>
</comment>
<comment type="similarity">
    <text evidence="6">Belongs to the pancreatic ribonuclease family.</text>
</comment>
<gene>
    <name type="primary">RNASE6</name>
</gene>
<keyword id="KW-0044">Antibiotic</keyword>
<keyword id="KW-0929">Antimicrobial</keyword>
<keyword id="KW-1015">Disulfide bond</keyword>
<keyword id="KW-0255">Endonuclease</keyword>
<keyword id="KW-0325">Glycoprotein</keyword>
<keyword id="KW-0378">Hydrolase</keyword>
<keyword id="KW-0458">Lysosome</keyword>
<keyword id="KW-0540">Nuclease</keyword>
<keyword id="KW-0964">Secreted</keyword>
<keyword id="KW-0732">Signal</keyword>
<organism>
    <name type="scientific">Saimiri sciureus</name>
    <name type="common">Common squirrel monkey</name>
    <dbReference type="NCBI Taxonomy" id="9521"/>
    <lineage>
        <taxon>Eukaryota</taxon>
        <taxon>Metazoa</taxon>
        <taxon>Chordata</taxon>
        <taxon>Craniata</taxon>
        <taxon>Vertebrata</taxon>
        <taxon>Euteleostomi</taxon>
        <taxon>Mammalia</taxon>
        <taxon>Eutheria</taxon>
        <taxon>Euarchontoglires</taxon>
        <taxon>Primates</taxon>
        <taxon>Haplorrhini</taxon>
        <taxon>Platyrrhini</taxon>
        <taxon>Cebidae</taxon>
        <taxon>Saimiriinae</taxon>
        <taxon>Saimiri</taxon>
    </lineage>
</organism>
<name>RNAS6_SAISC</name>
<evidence type="ECO:0000250" key="1"/>
<evidence type="ECO:0000250" key="2">
    <source>
        <dbReference type="UniProtKB" id="Q64438"/>
    </source>
</evidence>
<evidence type="ECO:0000250" key="3">
    <source>
        <dbReference type="UniProtKB" id="Q93091"/>
    </source>
</evidence>
<evidence type="ECO:0000250" key="4">
    <source>
        <dbReference type="UniProtKB" id="Q9H1E1"/>
    </source>
</evidence>
<evidence type="ECO:0000255" key="5"/>
<evidence type="ECO:0000305" key="6"/>
<sequence length="150" mass="17074">MVLCFPLLLLLLVLWGQVCPLHAIPKHLTKARWFEIQHIRPSPLQCNRAMNGINNYTQHCKPQNTFLHDSFQNVAAVCDLLSITCKNGYHNCHQSLKPVNMTDCRLTSGSYPQCRYSTAAQYKLFIIACEPPQKSDPPYNLVPVHLDSIL</sequence>
<dbReference type="EC" id="3.1.27.-"/>
<dbReference type="EMBL" id="AF037085">
    <property type="protein sequence ID" value="AAB94747.1"/>
    <property type="molecule type" value="Genomic_DNA"/>
</dbReference>
<dbReference type="SMR" id="O46529"/>
<dbReference type="GlyCosmos" id="O46529">
    <property type="glycosylation" value="2 sites, No reported glycans"/>
</dbReference>
<dbReference type="GO" id="GO:0005615">
    <property type="term" value="C:extracellular space"/>
    <property type="evidence" value="ECO:0007669"/>
    <property type="project" value="TreeGrafter"/>
</dbReference>
<dbReference type="GO" id="GO:0005764">
    <property type="term" value="C:lysosome"/>
    <property type="evidence" value="ECO:0007669"/>
    <property type="project" value="UniProtKB-SubCell"/>
</dbReference>
<dbReference type="GO" id="GO:0004519">
    <property type="term" value="F:endonuclease activity"/>
    <property type="evidence" value="ECO:0007669"/>
    <property type="project" value="UniProtKB-KW"/>
</dbReference>
<dbReference type="GO" id="GO:0003676">
    <property type="term" value="F:nucleic acid binding"/>
    <property type="evidence" value="ECO:0007669"/>
    <property type="project" value="InterPro"/>
</dbReference>
<dbReference type="GO" id="GO:0004540">
    <property type="term" value="F:RNA nuclease activity"/>
    <property type="evidence" value="ECO:0007669"/>
    <property type="project" value="TreeGrafter"/>
</dbReference>
<dbReference type="GO" id="GO:0019731">
    <property type="term" value="P:antibacterial humoral response"/>
    <property type="evidence" value="ECO:0007669"/>
    <property type="project" value="TreeGrafter"/>
</dbReference>
<dbReference type="GO" id="GO:0061844">
    <property type="term" value="P:antimicrobial humoral immune response mediated by antimicrobial peptide"/>
    <property type="evidence" value="ECO:0007669"/>
    <property type="project" value="TreeGrafter"/>
</dbReference>
<dbReference type="GO" id="GO:0050829">
    <property type="term" value="P:defense response to Gram-negative bacterium"/>
    <property type="evidence" value="ECO:0007669"/>
    <property type="project" value="TreeGrafter"/>
</dbReference>
<dbReference type="GO" id="GO:0050830">
    <property type="term" value="P:defense response to Gram-positive bacterium"/>
    <property type="evidence" value="ECO:0007669"/>
    <property type="project" value="TreeGrafter"/>
</dbReference>
<dbReference type="GO" id="GO:0045087">
    <property type="term" value="P:innate immune response"/>
    <property type="evidence" value="ECO:0007669"/>
    <property type="project" value="TreeGrafter"/>
</dbReference>
<dbReference type="CDD" id="cd06265">
    <property type="entry name" value="RNase_A_canonical"/>
    <property type="match status" value="1"/>
</dbReference>
<dbReference type="FunFam" id="3.10.130.10:FF:000001">
    <property type="entry name" value="Ribonuclease pancreatic"/>
    <property type="match status" value="1"/>
</dbReference>
<dbReference type="Gene3D" id="3.10.130.10">
    <property type="entry name" value="Ribonuclease A-like domain"/>
    <property type="match status" value="1"/>
</dbReference>
<dbReference type="InterPro" id="IPR001427">
    <property type="entry name" value="RNaseA"/>
</dbReference>
<dbReference type="InterPro" id="IPR036816">
    <property type="entry name" value="RNaseA-like_dom_sf"/>
</dbReference>
<dbReference type="InterPro" id="IPR023411">
    <property type="entry name" value="RNaseA_AS"/>
</dbReference>
<dbReference type="InterPro" id="IPR023412">
    <property type="entry name" value="RNaseA_domain"/>
</dbReference>
<dbReference type="PANTHER" id="PTHR11437">
    <property type="entry name" value="RIBONUCLEASE"/>
    <property type="match status" value="1"/>
</dbReference>
<dbReference type="PANTHER" id="PTHR11437:SF4">
    <property type="entry name" value="RIBONUCLEASE K6"/>
    <property type="match status" value="1"/>
</dbReference>
<dbReference type="Pfam" id="PF00074">
    <property type="entry name" value="RnaseA"/>
    <property type="match status" value="1"/>
</dbReference>
<dbReference type="PRINTS" id="PR00794">
    <property type="entry name" value="RIBONUCLEASE"/>
</dbReference>
<dbReference type="SMART" id="SM00092">
    <property type="entry name" value="RNAse_Pc"/>
    <property type="match status" value="1"/>
</dbReference>
<dbReference type="SUPFAM" id="SSF54076">
    <property type="entry name" value="RNase A-like"/>
    <property type="match status" value="1"/>
</dbReference>
<dbReference type="PROSITE" id="PS00127">
    <property type="entry name" value="RNASE_PANCREATIC"/>
    <property type="match status" value="1"/>
</dbReference>
<feature type="signal peptide" evidence="1">
    <location>
        <begin position="1"/>
        <end position="23"/>
    </location>
</feature>
<feature type="chain" id="PRO_0000030899" description="Ribonuclease K6">
    <location>
        <begin position="24"/>
        <end position="150"/>
    </location>
</feature>
<feature type="active site" description="Proton acceptor" evidence="2">
    <location>
        <position position="38"/>
    </location>
</feature>
<feature type="active site" description="Proton donor" evidence="2">
    <location>
        <position position="145"/>
    </location>
</feature>
<feature type="binding site" evidence="1">
    <location>
        <begin position="61"/>
        <end position="65"/>
    </location>
    <ligand>
        <name>substrate</name>
    </ligand>
</feature>
<feature type="binding site" evidence="1">
    <location>
        <position position="86"/>
    </location>
    <ligand>
        <name>substrate</name>
    </ligand>
</feature>
<feature type="binding site" evidence="1">
    <location>
        <position position="105"/>
    </location>
    <ligand>
        <name>substrate</name>
    </ligand>
</feature>
<feature type="site" description="Facilitates cleavage of polynucleotide substrates" evidence="3">
    <location>
        <position position="59"/>
    </location>
</feature>
<feature type="site" description="Critical for catalytic activity" evidence="4">
    <location>
        <position position="61"/>
    </location>
</feature>
<feature type="glycosylation site" description="N-linked (GlcNAc...) asparagine" evidence="5">
    <location>
        <position position="55"/>
    </location>
</feature>
<feature type="glycosylation site" description="N-linked (GlcNAc...) asparagine" evidence="5">
    <location>
        <position position="100"/>
    </location>
</feature>
<feature type="disulfide bond" evidence="3">
    <location>
        <begin position="46"/>
        <end position="104"/>
    </location>
</feature>
<feature type="disulfide bond" evidence="3">
    <location>
        <begin position="60"/>
        <end position="114"/>
    </location>
</feature>
<feature type="disulfide bond" evidence="3">
    <location>
        <begin position="78"/>
        <end position="129"/>
    </location>
</feature>
<feature type="disulfide bond" evidence="3">
    <location>
        <begin position="85"/>
        <end position="92"/>
    </location>
</feature>